<sequence>MATAAMLCAARALRPRSWIPGTCQAQVRHTHQRASLLSFWELIPMRAEPLRKKKKVDPRKDQAAKDRLKKRIRKLERASQELVPIEDFITPVRFLDKSRQRPQEEHSFEESERRALLLKRWALYKQQEHEMERDAIRAMLEAQQEALEQLKLESTELYAEAIKRDTSLFPFEKEGPHYTPPVPNYQAPEGRYNDITKVYTQVEFKR</sequence>
<reference key="1">
    <citation type="journal article" date="2004" name="Genome Res.">
        <title>The status, quality, and expansion of the NIH full-length cDNA project: the Mammalian Gene Collection (MGC).</title>
        <authorList>
            <consortium name="The MGC Project Team"/>
        </authorList>
    </citation>
    <scope>NUCLEOTIDE SEQUENCE [LARGE SCALE MRNA]</scope>
    <source>
        <tissue>Testis</tissue>
    </source>
</reference>
<reference evidence="4" key="2">
    <citation type="journal article" date="1998" name="J. Biol. Chem.">
        <title>Mammalian mitochondrial ribosomal proteins. N-terminal amino acid sequencing, characterization, and identification of corresponding gene sequences.</title>
        <authorList>
            <person name="Goldschmidt-Reisin S."/>
            <person name="Kitakawa M."/>
            <person name="Herfurth E."/>
            <person name="Wittmann-Liebold B."/>
            <person name="Grohmann L."/>
            <person name="Graack H.-R."/>
        </authorList>
    </citation>
    <scope>PROTEIN SEQUENCE OF 47-75</scope>
    <scope>SUBCELLULAR LOCATION</scope>
</reference>
<proteinExistence type="evidence at protein level"/>
<organism evidence="4">
    <name type="scientific">Rattus norvegicus</name>
    <name type="common">Rat</name>
    <dbReference type="NCBI Taxonomy" id="10116"/>
    <lineage>
        <taxon>Eukaryota</taxon>
        <taxon>Metazoa</taxon>
        <taxon>Chordata</taxon>
        <taxon>Craniata</taxon>
        <taxon>Vertebrata</taxon>
        <taxon>Euteleostomi</taxon>
        <taxon>Mammalia</taxon>
        <taxon>Eutheria</taxon>
        <taxon>Euarchontoglires</taxon>
        <taxon>Glires</taxon>
        <taxon>Rodentia</taxon>
        <taxon>Myomorpha</taxon>
        <taxon>Muroidea</taxon>
        <taxon>Muridae</taxon>
        <taxon>Murinae</taxon>
        <taxon>Rattus</taxon>
    </lineage>
</organism>
<gene>
    <name type="primary">Mrpl40</name>
</gene>
<comment type="subunit">
    <text evidence="1">Component of the mitochondrial ribosome large subunit (39S) which comprises a 16S rRNA and about 50 distinct proteins.</text>
</comment>
<comment type="subcellular location">
    <subcellularLocation>
        <location evidence="3">Mitochondrion</location>
    </subcellularLocation>
</comment>
<comment type="similarity">
    <text evidence="4">Belongs to the mitochondrion-specific ribosomal protein mL40 family.</text>
</comment>
<feature type="transit peptide" description="Mitochondrion" evidence="3">
    <location>
        <begin position="1"/>
        <end position="46"/>
    </location>
</feature>
<feature type="chain" id="PRO_0000087687" description="Large ribosomal subunit protein mL40">
    <location>
        <begin position="47"/>
        <end position="206"/>
    </location>
</feature>
<feature type="region of interest" description="Disordered" evidence="2">
    <location>
        <begin position="170"/>
        <end position="190"/>
    </location>
</feature>
<feature type="sequence conflict" description="In Ref. 2; AA sequence." evidence="4" ref="2">
    <original>V</original>
    <variation>Y</variation>
    <location>
        <position position="56"/>
    </location>
</feature>
<evidence type="ECO:0000250" key="1">
    <source>
        <dbReference type="UniProtKB" id="Q9NQ50"/>
    </source>
</evidence>
<evidence type="ECO:0000256" key="2">
    <source>
        <dbReference type="SAM" id="MobiDB-lite"/>
    </source>
</evidence>
<evidence type="ECO:0000269" key="3">
    <source>
    </source>
</evidence>
<evidence type="ECO:0000305" key="4"/>
<accession>P83565</accession>
<accession>Q4V8A4</accession>
<dbReference type="EMBL" id="BC097472">
    <property type="protein sequence ID" value="AAH97472.1"/>
    <property type="molecule type" value="mRNA"/>
</dbReference>
<dbReference type="RefSeq" id="NP_001020036.1">
    <property type="nucleotide sequence ID" value="NM_001024865.1"/>
</dbReference>
<dbReference type="SMR" id="P83565"/>
<dbReference type="FunCoup" id="P83565">
    <property type="interactions" value="2657"/>
</dbReference>
<dbReference type="STRING" id="10116.ENSRNOP00000065376"/>
<dbReference type="PhosphoSitePlus" id="P83565"/>
<dbReference type="jPOST" id="P83565"/>
<dbReference type="PaxDb" id="10116-ENSRNOP00000065376"/>
<dbReference type="Ensembl" id="ENSRNOT00000071159.2">
    <property type="protein sequence ID" value="ENSRNOP00000065376.1"/>
    <property type="gene ID" value="ENSRNOG00000049686.2"/>
</dbReference>
<dbReference type="GeneID" id="287962"/>
<dbReference type="KEGG" id="rno:287962"/>
<dbReference type="AGR" id="RGD:1565444"/>
<dbReference type="CTD" id="64976"/>
<dbReference type="RGD" id="1565444">
    <property type="gene designation" value="Mrpl40"/>
</dbReference>
<dbReference type="eggNOG" id="KOG4778">
    <property type="taxonomic scope" value="Eukaryota"/>
</dbReference>
<dbReference type="GeneTree" id="ENSGT00390000010239"/>
<dbReference type="HOGENOM" id="CLU_087493_0_0_1"/>
<dbReference type="InParanoid" id="P83565"/>
<dbReference type="OMA" id="KEWARYK"/>
<dbReference type="OrthoDB" id="5977625at2759"/>
<dbReference type="PhylomeDB" id="P83565"/>
<dbReference type="Reactome" id="R-RNO-5389840">
    <property type="pathway name" value="Mitochondrial translation elongation"/>
</dbReference>
<dbReference type="Reactome" id="R-RNO-5419276">
    <property type="pathway name" value="Mitochondrial translation termination"/>
</dbReference>
<dbReference type="PRO" id="PR:P83565"/>
<dbReference type="Proteomes" id="UP000002494">
    <property type="component" value="Chromosome 11"/>
</dbReference>
<dbReference type="Bgee" id="ENSRNOG00000049686">
    <property type="expression patterns" value="Expressed in heart and 20 other cell types or tissues"/>
</dbReference>
<dbReference type="GO" id="GO:0005762">
    <property type="term" value="C:mitochondrial large ribosomal subunit"/>
    <property type="evidence" value="ECO:0000250"/>
    <property type="project" value="UniProtKB"/>
</dbReference>
<dbReference type="GO" id="GO:0005761">
    <property type="term" value="C:mitochondrial ribosome"/>
    <property type="evidence" value="ECO:0000314"/>
    <property type="project" value="UniProtKB"/>
</dbReference>
<dbReference type="GO" id="GO:0005739">
    <property type="term" value="C:mitochondrion"/>
    <property type="evidence" value="ECO:0000266"/>
    <property type="project" value="RGD"/>
</dbReference>
<dbReference type="FunFam" id="6.10.250.3440:FF:000001">
    <property type="entry name" value="Mitochondrial ribosomal protein L40"/>
    <property type="match status" value="1"/>
</dbReference>
<dbReference type="Gene3D" id="6.10.250.3440">
    <property type="match status" value="1"/>
</dbReference>
<dbReference type="InterPro" id="IPR019192">
    <property type="entry name" value="Ribosomal_mL40"/>
</dbReference>
<dbReference type="InterPro" id="IPR039145">
    <property type="entry name" value="Ribosomal_mL40_metazoa/plant"/>
</dbReference>
<dbReference type="PANTHER" id="PTHR13359">
    <property type="entry name" value="39S RIBOSOMAL PROTEIN L40, MITOCHONDRIAL"/>
    <property type="match status" value="1"/>
</dbReference>
<dbReference type="PANTHER" id="PTHR13359:SF2">
    <property type="entry name" value="LARGE RIBOSOMAL SUBUNIT PROTEIN ML40"/>
    <property type="match status" value="1"/>
</dbReference>
<dbReference type="Pfam" id="PF09812">
    <property type="entry name" value="MRP-L28"/>
    <property type="match status" value="1"/>
</dbReference>
<protein>
    <recommendedName>
        <fullName evidence="4">Large ribosomal subunit protein mL40</fullName>
    </recommendedName>
    <alternativeName>
        <fullName>39S ribosomal protein L40, mitochondrial</fullName>
        <shortName>L40mt</shortName>
        <shortName>MRP-L40</shortName>
    </alternativeName>
</protein>
<keyword id="KW-0903">Direct protein sequencing</keyword>
<keyword id="KW-0496">Mitochondrion</keyword>
<keyword id="KW-1185">Reference proteome</keyword>
<keyword id="KW-0687">Ribonucleoprotein</keyword>
<keyword id="KW-0689">Ribosomal protein</keyword>
<keyword id="KW-0809">Transit peptide</keyword>
<name>RM40_RAT</name>